<dbReference type="EMBL" id="AE014134">
    <property type="protein sequence ID" value="AAF53916.1"/>
    <property type="molecule type" value="Genomic_DNA"/>
</dbReference>
<dbReference type="EMBL" id="AE014134">
    <property type="protein sequence ID" value="AAN11086.2"/>
    <property type="molecule type" value="Genomic_DNA"/>
</dbReference>
<dbReference type="EMBL" id="AY047547">
    <property type="protein sequence ID" value="AAK77279.1"/>
    <property type="status" value="ALT_INIT"/>
    <property type="molecule type" value="mRNA"/>
</dbReference>
<dbReference type="RefSeq" id="NP_610052.1">
    <property type="nucleotide sequence ID" value="NM_136208.4"/>
</dbReference>
<dbReference type="RefSeq" id="NP_724282.2">
    <property type="nucleotide sequence ID" value="NM_165340.3"/>
</dbReference>
<dbReference type="SMR" id="Q9VIK2"/>
<dbReference type="IntAct" id="Q9VIK2">
    <property type="interactions" value="1"/>
</dbReference>
<dbReference type="STRING" id="7227.FBpp0080925"/>
<dbReference type="GlyCosmos" id="Q9VIK2">
    <property type="glycosylation" value="3 sites, No reported glycans"/>
</dbReference>
<dbReference type="GlyGen" id="Q9VIK2">
    <property type="glycosylation" value="4 sites"/>
</dbReference>
<dbReference type="PaxDb" id="7227-FBpp0080925"/>
<dbReference type="DNASU" id="35334"/>
<dbReference type="EnsemblMetazoa" id="FBtr0081395">
    <property type="protein sequence ID" value="FBpp0080925"/>
    <property type="gene ID" value="FBgn0032879"/>
</dbReference>
<dbReference type="EnsemblMetazoa" id="FBtr0335150">
    <property type="protein sequence ID" value="FBpp0307149"/>
    <property type="gene ID" value="FBgn0032879"/>
</dbReference>
<dbReference type="GeneID" id="35334"/>
<dbReference type="KEGG" id="dme:Dmel_CG9317"/>
<dbReference type="UCSC" id="CG9317-RA">
    <property type="organism name" value="d. melanogaster"/>
</dbReference>
<dbReference type="UCSC" id="CG9317-RB">
    <property type="organism name" value="d. melanogaster"/>
</dbReference>
<dbReference type="AGR" id="FB:FBgn0032879"/>
<dbReference type="CTD" id="35334"/>
<dbReference type="FlyBase" id="FBgn0032879">
    <property type="gene designation" value="CarT"/>
</dbReference>
<dbReference type="VEuPathDB" id="VectorBase:FBgn0032879"/>
<dbReference type="eggNOG" id="KOG0255">
    <property type="taxonomic scope" value="Eukaryota"/>
</dbReference>
<dbReference type="HOGENOM" id="CLU_001265_33_4_1"/>
<dbReference type="InParanoid" id="Q9VIK2"/>
<dbReference type="OMA" id="DDYWCRV"/>
<dbReference type="OrthoDB" id="2544694at2759"/>
<dbReference type="PhylomeDB" id="Q9VIK2"/>
<dbReference type="Reactome" id="R-DME-112311">
    <property type="pathway name" value="Neurotransmitter clearance"/>
</dbReference>
<dbReference type="Reactome" id="R-DME-181430">
    <property type="pathway name" value="Norepinephrine Neurotransmitter Release Cycle"/>
</dbReference>
<dbReference type="Reactome" id="R-DME-200425">
    <property type="pathway name" value="Carnitine shuttle"/>
</dbReference>
<dbReference type="Reactome" id="R-DME-2161517">
    <property type="pathway name" value="Abacavir transmembrane transport"/>
</dbReference>
<dbReference type="Reactome" id="R-DME-442660">
    <property type="pathway name" value="Na+/Cl- dependent neurotransmitter transporters"/>
</dbReference>
<dbReference type="Reactome" id="R-DME-549127">
    <property type="pathway name" value="Organic cation transport"/>
</dbReference>
<dbReference type="Reactome" id="R-DME-561048">
    <property type="pathway name" value="Organic anion transport"/>
</dbReference>
<dbReference type="Reactome" id="R-DME-917937">
    <property type="pathway name" value="Iron uptake and transport"/>
</dbReference>
<dbReference type="Reactome" id="R-DME-9749641">
    <property type="pathway name" value="Aspirin ADME"/>
</dbReference>
<dbReference type="Reactome" id="R-DME-9793528">
    <property type="pathway name" value="Ciprofloxacin ADME"/>
</dbReference>
<dbReference type="BioGRID-ORCS" id="35334">
    <property type="hits" value="0 hits in 1 CRISPR screen"/>
</dbReference>
<dbReference type="GenomeRNAi" id="35334"/>
<dbReference type="PRO" id="PR:Q9VIK2"/>
<dbReference type="Proteomes" id="UP000000803">
    <property type="component" value="Chromosome 2L"/>
</dbReference>
<dbReference type="Bgee" id="FBgn0032879">
    <property type="expression patterns" value="Expressed in outer photoreceptor cell (Drosophila) in insect head and 19 other cell types or tissues"/>
</dbReference>
<dbReference type="ExpressionAtlas" id="Q9VIK2">
    <property type="expression patterns" value="baseline and differential"/>
</dbReference>
<dbReference type="GO" id="GO:0043679">
    <property type="term" value="C:axon terminus"/>
    <property type="evidence" value="ECO:0000314"/>
    <property type="project" value="UniProtKB"/>
</dbReference>
<dbReference type="GO" id="GO:0005886">
    <property type="term" value="C:plasma membrane"/>
    <property type="evidence" value="ECO:0007669"/>
    <property type="project" value="UniProtKB-SubCell"/>
</dbReference>
<dbReference type="GO" id="GO:1905131">
    <property type="term" value="F:carcinine transmembrane transporter activity"/>
    <property type="evidence" value="ECO:0000314"/>
    <property type="project" value="FlyBase"/>
</dbReference>
<dbReference type="GO" id="GO:0005326">
    <property type="term" value="F:neurotransmitter transmembrane transporter activity"/>
    <property type="evidence" value="ECO:0000314"/>
    <property type="project" value="FlyBase"/>
</dbReference>
<dbReference type="GO" id="GO:1905130">
    <property type="term" value="P:carcinine import across plasma membrane"/>
    <property type="evidence" value="ECO:0000314"/>
    <property type="project" value="FlyBase"/>
</dbReference>
<dbReference type="GO" id="GO:0050908">
    <property type="term" value="P:detection of light stimulus involved in visual perception"/>
    <property type="evidence" value="ECO:0000315"/>
    <property type="project" value="FlyBase"/>
</dbReference>
<dbReference type="GO" id="GO:0001504">
    <property type="term" value="P:neurotransmitter uptake"/>
    <property type="evidence" value="ECO:0000314"/>
    <property type="project" value="FlyBase"/>
</dbReference>
<dbReference type="GO" id="GO:0046956">
    <property type="term" value="P:positive phototaxis"/>
    <property type="evidence" value="ECO:0000315"/>
    <property type="project" value="FlyBase"/>
</dbReference>
<dbReference type="GO" id="GO:0007601">
    <property type="term" value="P:visual perception"/>
    <property type="evidence" value="ECO:0000315"/>
    <property type="project" value="FlyBase"/>
</dbReference>
<dbReference type="CDD" id="cd17317">
    <property type="entry name" value="MFS_SLC22"/>
    <property type="match status" value="1"/>
</dbReference>
<dbReference type="FunFam" id="1.20.1250.20:FF:000654">
    <property type="entry name" value="Carcinine transporter"/>
    <property type="match status" value="1"/>
</dbReference>
<dbReference type="Gene3D" id="1.20.1250.20">
    <property type="entry name" value="MFS general substrate transporter like domains"/>
    <property type="match status" value="1"/>
</dbReference>
<dbReference type="InterPro" id="IPR020846">
    <property type="entry name" value="MFS_dom"/>
</dbReference>
<dbReference type="InterPro" id="IPR005828">
    <property type="entry name" value="MFS_sugar_transport-like"/>
</dbReference>
<dbReference type="InterPro" id="IPR036259">
    <property type="entry name" value="MFS_trans_sf"/>
</dbReference>
<dbReference type="PANTHER" id="PTHR24064">
    <property type="entry name" value="SOLUTE CARRIER FAMILY 22 MEMBER"/>
    <property type="match status" value="1"/>
</dbReference>
<dbReference type="Pfam" id="PF00083">
    <property type="entry name" value="Sugar_tr"/>
    <property type="match status" value="1"/>
</dbReference>
<dbReference type="SUPFAM" id="SSF103473">
    <property type="entry name" value="MFS general substrate transporter"/>
    <property type="match status" value="1"/>
</dbReference>
<dbReference type="PROSITE" id="PS50850">
    <property type="entry name" value="MFS"/>
    <property type="match status" value="1"/>
</dbReference>
<reference evidence="11" key="1">
    <citation type="journal article" date="2000" name="Science">
        <title>The genome sequence of Drosophila melanogaster.</title>
        <authorList>
            <person name="Adams M.D."/>
            <person name="Celniker S.E."/>
            <person name="Holt R.A."/>
            <person name="Evans C.A."/>
            <person name="Gocayne J.D."/>
            <person name="Amanatides P.G."/>
            <person name="Scherer S.E."/>
            <person name="Li P.W."/>
            <person name="Hoskins R.A."/>
            <person name="Galle R.F."/>
            <person name="George R.A."/>
            <person name="Lewis S.E."/>
            <person name="Richards S."/>
            <person name="Ashburner M."/>
            <person name="Henderson S.N."/>
            <person name="Sutton G.G."/>
            <person name="Wortman J.R."/>
            <person name="Yandell M.D."/>
            <person name="Zhang Q."/>
            <person name="Chen L.X."/>
            <person name="Brandon R.C."/>
            <person name="Rogers Y.-H.C."/>
            <person name="Blazej R.G."/>
            <person name="Champe M."/>
            <person name="Pfeiffer B.D."/>
            <person name="Wan K.H."/>
            <person name="Doyle C."/>
            <person name="Baxter E.G."/>
            <person name="Helt G."/>
            <person name="Nelson C.R."/>
            <person name="Miklos G.L.G."/>
            <person name="Abril J.F."/>
            <person name="Agbayani A."/>
            <person name="An H.-J."/>
            <person name="Andrews-Pfannkoch C."/>
            <person name="Baldwin D."/>
            <person name="Ballew R.M."/>
            <person name="Basu A."/>
            <person name="Baxendale J."/>
            <person name="Bayraktaroglu L."/>
            <person name="Beasley E.M."/>
            <person name="Beeson K.Y."/>
            <person name="Benos P.V."/>
            <person name="Berman B.P."/>
            <person name="Bhandari D."/>
            <person name="Bolshakov S."/>
            <person name="Borkova D."/>
            <person name="Botchan M.R."/>
            <person name="Bouck J."/>
            <person name="Brokstein P."/>
            <person name="Brottier P."/>
            <person name="Burtis K.C."/>
            <person name="Busam D.A."/>
            <person name="Butler H."/>
            <person name="Cadieu E."/>
            <person name="Center A."/>
            <person name="Chandra I."/>
            <person name="Cherry J.M."/>
            <person name="Cawley S."/>
            <person name="Dahlke C."/>
            <person name="Davenport L.B."/>
            <person name="Davies P."/>
            <person name="de Pablos B."/>
            <person name="Delcher A."/>
            <person name="Deng Z."/>
            <person name="Mays A.D."/>
            <person name="Dew I."/>
            <person name="Dietz S.M."/>
            <person name="Dodson K."/>
            <person name="Doup L.E."/>
            <person name="Downes M."/>
            <person name="Dugan-Rocha S."/>
            <person name="Dunkov B.C."/>
            <person name="Dunn P."/>
            <person name="Durbin K.J."/>
            <person name="Evangelista C.C."/>
            <person name="Ferraz C."/>
            <person name="Ferriera S."/>
            <person name="Fleischmann W."/>
            <person name="Fosler C."/>
            <person name="Gabrielian A.E."/>
            <person name="Garg N.S."/>
            <person name="Gelbart W.M."/>
            <person name="Glasser K."/>
            <person name="Glodek A."/>
            <person name="Gong F."/>
            <person name="Gorrell J.H."/>
            <person name="Gu Z."/>
            <person name="Guan P."/>
            <person name="Harris M."/>
            <person name="Harris N.L."/>
            <person name="Harvey D.A."/>
            <person name="Heiman T.J."/>
            <person name="Hernandez J.R."/>
            <person name="Houck J."/>
            <person name="Hostin D."/>
            <person name="Houston K.A."/>
            <person name="Howland T.J."/>
            <person name="Wei M.-H."/>
            <person name="Ibegwam C."/>
            <person name="Jalali M."/>
            <person name="Kalush F."/>
            <person name="Karpen G.H."/>
            <person name="Ke Z."/>
            <person name="Kennison J.A."/>
            <person name="Ketchum K.A."/>
            <person name="Kimmel B.E."/>
            <person name="Kodira C.D."/>
            <person name="Kraft C.L."/>
            <person name="Kravitz S."/>
            <person name="Kulp D."/>
            <person name="Lai Z."/>
            <person name="Lasko P."/>
            <person name="Lei Y."/>
            <person name="Levitsky A.A."/>
            <person name="Li J.H."/>
            <person name="Li Z."/>
            <person name="Liang Y."/>
            <person name="Lin X."/>
            <person name="Liu X."/>
            <person name="Mattei B."/>
            <person name="McIntosh T.C."/>
            <person name="McLeod M.P."/>
            <person name="McPherson D."/>
            <person name="Merkulov G."/>
            <person name="Milshina N.V."/>
            <person name="Mobarry C."/>
            <person name="Morris J."/>
            <person name="Moshrefi A."/>
            <person name="Mount S.M."/>
            <person name="Moy M."/>
            <person name="Murphy B."/>
            <person name="Murphy L."/>
            <person name="Muzny D.M."/>
            <person name="Nelson D.L."/>
            <person name="Nelson D.R."/>
            <person name="Nelson K.A."/>
            <person name="Nixon K."/>
            <person name="Nusskern D.R."/>
            <person name="Pacleb J.M."/>
            <person name="Palazzolo M."/>
            <person name="Pittman G.S."/>
            <person name="Pan S."/>
            <person name="Pollard J."/>
            <person name="Puri V."/>
            <person name="Reese M.G."/>
            <person name="Reinert K."/>
            <person name="Remington K."/>
            <person name="Saunders R.D.C."/>
            <person name="Scheeler F."/>
            <person name="Shen H."/>
            <person name="Shue B.C."/>
            <person name="Siden-Kiamos I."/>
            <person name="Simpson M."/>
            <person name="Skupski M.P."/>
            <person name="Smith T.J."/>
            <person name="Spier E."/>
            <person name="Spradling A.C."/>
            <person name="Stapleton M."/>
            <person name="Strong R."/>
            <person name="Sun E."/>
            <person name="Svirskas R."/>
            <person name="Tector C."/>
            <person name="Turner R."/>
            <person name="Venter E."/>
            <person name="Wang A.H."/>
            <person name="Wang X."/>
            <person name="Wang Z.-Y."/>
            <person name="Wassarman D.A."/>
            <person name="Weinstock G.M."/>
            <person name="Weissenbach J."/>
            <person name="Williams S.M."/>
            <person name="Woodage T."/>
            <person name="Worley K.C."/>
            <person name="Wu D."/>
            <person name="Yang S."/>
            <person name="Yao Q.A."/>
            <person name="Ye J."/>
            <person name="Yeh R.-F."/>
            <person name="Zaveri J.S."/>
            <person name="Zhan M."/>
            <person name="Zhang G."/>
            <person name="Zhao Q."/>
            <person name="Zheng L."/>
            <person name="Zheng X.H."/>
            <person name="Zhong F.N."/>
            <person name="Zhong W."/>
            <person name="Zhou X."/>
            <person name="Zhu S.C."/>
            <person name="Zhu X."/>
            <person name="Smith H.O."/>
            <person name="Gibbs R.A."/>
            <person name="Myers E.W."/>
            <person name="Rubin G.M."/>
            <person name="Venter J.C."/>
        </authorList>
    </citation>
    <scope>NUCLEOTIDE SEQUENCE [LARGE SCALE GENOMIC DNA]</scope>
    <source>
        <strain evidence="11">Berkeley</strain>
    </source>
</reference>
<reference evidence="11" key="2">
    <citation type="journal article" date="2002" name="Genome Biol.">
        <title>Annotation of the Drosophila melanogaster euchromatic genome: a systematic review.</title>
        <authorList>
            <person name="Misra S."/>
            <person name="Crosby M.A."/>
            <person name="Mungall C.J."/>
            <person name="Matthews B.B."/>
            <person name="Campbell K.S."/>
            <person name="Hradecky P."/>
            <person name="Huang Y."/>
            <person name="Kaminker J.S."/>
            <person name="Millburn G.H."/>
            <person name="Prochnik S.E."/>
            <person name="Smith C.D."/>
            <person name="Tupy J.L."/>
            <person name="Whitfield E.J."/>
            <person name="Bayraktaroglu L."/>
            <person name="Berman B.P."/>
            <person name="Bettencourt B.R."/>
            <person name="Celniker S.E."/>
            <person name="de Grey A.D.N.J."/>
            <person name="Drysdale R.A."/>
            <person name="Harris N.L."/>
            <person name="Richter J."/>
            <person name="Russo S."/>
            <person name="Schroeder A.J."/>
            <person name="Shu S.Q."/>
            <person name="Stapleton M."/>
            <person name="Yamada C."/>
            <person name="Ashburner M."/>
            <person name="Gelbart W.M."/>
            <person name="Rubin G.M."/>
            <person name="Lewis S.E."/>
        </authorList>
    </citation>
    <scope>GENOME REANNOTATION</scope>
    <source>
        <strain evidence="11">Berkeley</strain>
    </source>
</reference>
<reference evidence="9" key="3">
    <citation type="journal article" date="2002" name="Genome Biol.">
        <title>A Drosophila full-length cDNA resource.</title>
        <authorList>
            <person name="Stapleton M."/>
            <person name="Carlson J.W."/>
            <person name="Brokstein P."/>
            <person name="Yu C."/>
            <person name="Champe M."/>
            <person name="George R.A."/>
            <person name="Guarin H."/>
            <person name="Kronmiller B."/>
            <person name="Pacleb J.M."/>
            <person name="Park S."/>
            <person name="Wan K.H."/>
            <person name="Rubin G.M."/>
            <person name="Celniker S.E."/>
        </authorList>
    </citation>
    <scope>NUCLEOTIDE SEQUENCE [LARGE SCALE MRNA] OF 28-674</scope>
    <source>
        <strain evidence="9">Berkeley</strain>
        <tissue evidence="9">Head</tissue>
    </source>
</reference>
<reference evidence="8" key="4">
    <citation type="journal article" date="2015" name="Elife">
        <title>The carcinine transporter CarT is required in Drosophila photoreceptor neurons to sustain histamine recycling.</title>
        <authorList>
            <person name="Stenesen D."/>
            <person name="Moehlman A.T."/>
            <person name="Kraemer H."/>
        </authorList>
    </citation>
    <scope>FUNCTION</scope>
    <scope>TISSUE SPECIFICITY</scope>
    <scope>DISRUPTION PHENOTYPE</scope>
</reference>
<reference evidence="8" key="5">
    <citation type="journal article" date="2015" name="PLoS Genet.">
        <title>Histamine recycling is mediated by CarT, a carcinine transporter in Drosophila photoreceptors.</title>
        <authorList>
            <person name="Xu Y."/>
            <person name="An F."/>
            <person name="Borycz J.A."/>
            <person name="Borycz J."/>
            <person name="Meinertzhagen I.A."/>
            <person name="Wang T."/>
        </authorList>
    </citation>
    <scope>FUNCTION</scope>
    <scope>TISSUE SPECIFICITY</scope>
    <scope>DISRUPTION PHENOTYPE</scope>
</reference>
<sequence length="674" mass="76193">MSDIEDNDGDEYDELSELRQRHKPESQPSVDEAFDLDDLLPTIGEFGKYQKLLVFGICLPACIPCGFCAFNQLFMADTPDDYWCRIPELLDLPLEQRKSLSIPKELDNDELVYSKCYTYGVNWTQLLESGEEDDLTTMEPNASWPLIKCPQGWEYNTSVVWSSIVIDFDLVCDQDIYPTIGLAALNTGGPVGVYLFGLLNDRGGRRLSYFVCLATLLAGSLMTSLSKDFWTWAGSRVIVGLTIPAVYQIPFIISLELVGENYRSFVTVMTCTFYTSGIMLLSGVTYLERDWVRLSYITSLPFYAYFLYMFVMPESPRWLLMRGRLEEALKILERMAKVNGREFPEAVHLKLEAQIRRDKLKKQKKKMANVGLADLCRTPNMRLKTILITLSWFANETVYLGLSYYGPALGTNQYVSFFLSAVVELPSYLCCWYFMDTWGRRWPLSLSMILGGVACVITVMLPDDAVDETLVLYLVSKALLSASFLIIYPFAGELYPTQVRGIGIGASSYIGGLGLIGIPFITYLGKDNLKLPLVIMGFLSMLGGMTGLRLPETLHHRLPQTIEEGEEFGKNWQFKDCCRCAQKPEILSQPASYENLDVLAGSSTNASEVELELRDSRRVREPAPRIDERTPLDTTASGSGRPVHRPSMKRLVRQMSVMDTQRTHDGTMQLTHWI</sequence>
<evidence type="ECO:0000255" key="1"/>
<evidence type="ECO:0000255" key="2">
    <source>
        <dbReference type="PROSITE-ProRule" id="PRU00498"/>
    </source>
</evidence>
<evidence type="ECO:0000256" key="3">
    <source>
        <dbReference type="SAM" id="MobiDB-lite"/>
    </source>
</evidence>
<evidence type="ECO:0000269" key="4">
    <source>
    </source>
</evidence>
<evidence type="ECO:0000269" key="5">
    <source>
    </source>
</evidence>
<evidence type="ECO:0000303" key="6">
    <source>
    </source>
</evidence>
<evidence type="ECO:0000303" key="7">
    <source>
    </source>
</evidence>
<evidence type="ECO:0000305" key="8"/>
<evidence type="ECO:0000312" key="9">
    <source>
        <dbReference type="EMBL" id="AAK77279.1"/>
    </source>
</evidence>
<evidence type="ECO:0000312" key="10">
    <source>
        <dbReference type="FlyBase" id="FBgn0032879"/>
    </source>
</evidence>
<evidence type="ECO:0000312" key="11">
    <source>
        <dbReference type="Proteomes" id="UP000000803"/>
    </source>
</evidence>
<name>CART_DROME</name>
<protein>
    <recommendedName>
        <fullName evidence="6 7">Carcinine transporter</fullName>
    </recommendedName>
</protein>
<accession>Q9VIK2</accession>
<accession>Q961U9</accession>
<organism evidence="11">
    <name type="scientific">Drosophila melanogaster</name>
    <name type="common">Fruit fly</name>
    <dbReference type="NCBI Taxonomy" id="7227"/>
    <lineage>
        <taxon>Eukaryota</taxon>
        <taxon>Metazoa</taxon>
        <taxon>Ecdysozoa</taxon>
        <taxon>Arthropoda</taxon>
        <taxon>Hexapoda</taxon>
        <taxon>Insecta</taxon>
        <taxon>Pterygota</taxon>
        <taxon>Neoptera</taxon>
        <taxon>Endopterygota</taxon>
        <taxon>Diptera</taxon>
        <taxon>Brachycera</taxon>
        <taxon>Muscomorpha</taxon>
        <taxon>Ephydroidea</taxon>
        <taxon>Drosophilidae</taxon>
        <taxon>Drosophila</taxon>
        <taxon>Sophophora</taxon>
    </lineage>
</organism>
<feature type="chain" id="PRO_0000436159" description="Carcinine transporter">
    <location>
        <begin position="1"/>
        <end position="674"/>
    </location>
</feature>
<feature type="topological domain" description="Cytoplasmic" evidence="8">
    <location>
        <begin position="1"/>
        <end position="53"/>
    </location>
</feature>
<feature type="transmembrane region" description="Helical; Name=1" evidence="1">
    <location>
        <begin position="54"/>
        <end position="74"/>
    </location>
</feature>
<feature type="topological domain" description="Extracellular" evidence="8">
    <location>
        <begin position="75"/>
        <end position="178"/>
    </location>
</feature>
<feature type="transmembrane region" description="Helical; Name=2" evidence="1">
    <location>
        <begin position="179"/>
        <end position="199"/>
    </location>
</feature>
<feature type="topological domain" description="Cytoplasmic" evidence="8">
    <location>
        <begin position="200"/>
        <end position="206"/>
    </location>
</feature>
<feature type="transmembrane region" description="Helical; Name=3" evidence="1">
    <location>
        <begin position="207"/>
        <end position="227"/>
    </location>
</feature>
<feature type="topological domain" description="Extracellular" evidence="8">
    <location>
        <begin position="228"/>
        <end position="236"/>
    </location>
</feature>
<feature type="transmembrane region" description="Helical; Name=4" evidence="1">
    <location>
        <begin position="237"/>
        <end position="257"/>
    </location>
</feature>
<feature type="topological domain" description="Cytoplasmic" evidence="8">
    <location>
        <begin position="258"/>
        <end position="264"/>
    </location>
</feature>
<feature type="transmembrane region" description="Helical; Name=5" evidence="1">
    <location>
        <begin position="265"/>
        <end position="285"/>
    </location>
</feature>
<feature type="topological domain" description="Extracellular" evidence="8">
    <location>
        <begin position="286"/>
        <end position="293"/>
    </location>
</feature>
<feature type="transmembrane region" description="Helical; Name=6" evidence="1">
    <location>
        <begin position="294"/>
        <end position="314"/>
    </location>
</feature>
<feature type="topological domain" description="Cytoplasmic" evidence="8">
    <location>
        <begin position="315"/>
        <end position="385"/>
    </location>
</feature>
<feature type="transmembrane region" description="Helical; Name=7" evidence="1">
    <location>
        <begin position="386"/>
        <end position="406"/>
    </location>
</feature>
<feature type="topological domain" description="Extracellular" evidence="8">
    <location>
        <begin position="407"/>
        <end position="414"/>
    </location>
</feature>
<feature type="transmembrane region" description="Helical; Name=8" evidence="1">
    <location>
        <begin position="415"/>
        <end position="435"/>
    </location>
</feature>
<feature type="topological domain" description="Cytoplasmic" evidence="8">
    <location>
        <begin position="436"/>
        <end position="441"/>
    </location>
</feature>
<feature type="transmembrane region" description="Helical; Name=9" evidence="1">
    <location>
        <begin position="442"/>
        <end position="462"/>
    </location>
</feature>
<feature type="topological domain" description="Extracellular" evidence="8">
    <location>
        <begin position="463"/>
        <end position="469"/>
    </location>
</feature>
<feature type="transmembrane region" description="Helical; Name=10" evidence="1">
    <location>
        <begin position="470"/>
        <end position="490"/>
    </location>
</feature>
<feature type="topological domain" description="Cytoplasmic" evidence="8">
    <location>
        <begin position="491"/>
        <end position="500"/>
    </location>
</feature>
<feature type="transmembrane region" description="Helical; Name=11" evidence="1">
    <location>
        <begin position="501"/>
        <end position="521"/>
    </location>
</feature>
<feature type="topological domain" description="Extracellular" evidence="8">
    <location>
        <begin position="522"/>
        <end position="527"/>
    </location>
</feature>
<feature type="transmembrane region" description="Helical; Name=12" evidence="1">
    <location>
        <begin position="528"/>
        <end position="548"/>
    </location>
</feature>
<feature type="topological domain" description="Cytoplasmic" evidence="8">
    <location>
        <begin position="549"/>
        <end position="674"/>
    </location>
</feature>
<feature type="region of interest" description="Disordered" evidence="3">
    <location>
        <begin position="614"/>
        <end position="647"/>
    </location>
</feature>
<feature type="compositionally biased region" description="Basic and acidic residues" evidence="3">
    <location>
        <begin position="614"/>
        <end position="631"/>
    </location>
</feature>
<feature type="glycosylation site" description="N-linked (GlcNAc...) asparagine" evidence="2">
    <location>
        <position position="122"/>
    </location>
</feature>
<feature type="glycosylation site" description="N-linked (GlcNAc...) asparagine" evidence="2">
    <location>
        <position position="141"/>
    </location>
</feature>
<feature type="glycosylation site" description="N-linked (GlcNAc...) asparagine" evidence="2">
    <location>
        <position position="156"/>
    </location>
</feature>
<feature type="sequence conflict" description="In Ref. 3; AAK77279." evidence="8" ref="3">
    <original>P</original>
    <variation>Q</variation>
    <location>
        <position position="28"/>
    </location>
</feature>
<feature type="sequence conflict" description="In Ref. 3; AAK77279." evidence="8" ref="3">
    <original>VD</original>
    <variation>GS</variation>
    <location>
        <begin position="30"/>
        <end position="31"/>
    </location>
</feature>
<comment type="function">
    <text evidence="4 5">Carcinine transporter which is required for recycling of the neurotransmitter histamine in photoreceptor neurons of the compound eye. Following histamine release from photoreceptors and its uptake by glia where it is converted to carcinine, required for the uptake of carcinine from glia into photoreceptor cells where it can be hydrolyzed by tan to form histamine and beta-alanine.</text>
</comment>
<comment type="subcellular location">
    <subcellularLocation>
        <location evidence="8">Cell membrane</location>
        <topology evidence="1">Multi-pass membrane protein</topology>
    </subcellularLocation>
    <subcellularLocation>
        <location evidence="4 5">Cell projection</location>
        <location evidence="4 5">Axon</location>
    </subcellularLocation>
    <text evidence="4 5">Expressed predominantly in photoreceptor axon termini.</text>
</comment>
<comment type="tissue specificity">
    <text evidence="4 5">Expressed in photoreceptor cells.</text>
</comment>
<comment type="disruption phenotype">
    <text evidence="4 5">Defective photoreceptor synaptic transmission, significantly reduced phototaxis and decreased levels of histamine in photoreceptor terminals.</text>
</comment>
<comment type="similarity">
    <text evidence="8">Belongs to the major facilitator (TC 2.A.1) superfamily. Organic cation transporter (TC 2.A.1.19) family.</text>
</comment>
<comment type="sequence caution" evidence="8">
    <conflict type="erroneous initiation">
        <sequence resource="EMBL-CDS" id="AAK77279"/>
    </conflict>
    <text>Truncated N-terminus.</text>
</comment>
<proteinExistence type="evidence at transcript level"/>
<keyword id="KW-1003">Cell membrane</keyword>
<keyword id="KW-0966">Cell projection</keyword>
<keyword id="KW-0325">Glycoprotein</keyword>
<keyword id="KW-0472">Membrane</keyword>
<keyword id="KW-1185">Reference proteome</keyword>
<keyword id="KW-0812">Transmembrane</keyword>
<keyword id="KW-1133">Transmembrane helix</keyword>
<keyword id="KW-0813">Transport</keyword>
<gene>
    <name evidence="6 7" type="primary">CarT</name>
    <name evidence="10" type="ORF">CG9317</name>
</gene>